<organism>
    <name type="scientific">Pan troglodytes</name>
    <name type="common">Chimpanzee</name>
    <dbReference type="NCBI Taxonomy" id="9598"/>
    <lineage>
        <taxon>Eukaryota</taxon>
        <taxon>Metazoa</taxon>
        <taxon>Chordata</taxon>
        <taxon>Craniata</taxon>
        <taxon>Vertebrata</taxon>
        <taxon>Euteleostomi</taxon>
        <taxon>Mammalia</taxon>
        <taxon>Eutheria</taxon>
        <taxon>Euarchontoglires</taxon>
        <taxon>Primates</taxon>
        <taxon>Haplorrhini</taxon>
        <taxon>Catarrhini</taxon>
        <taxon>Hominidae</taxon>
        <taxon>Pan</taxon>
    </lineage>
</organism>
<reference key="1">
    <citation type="journal article" date="1999" name="Genomics">
        <title>Primate evolution of an olfactory receptor cluster: diversification by gene conversion and recent emergence of pseudogenes.</title>
        <authorList>
            <person name="Sharon D."/>
            <person name="Glusman G."/>
            <person name="Pilpel Y."/>
            <person name="Khen M."/>
            <person name="Gruetzner F."/>
            <person name="Haaf T."/>
            <person name="Lancet D."/>
        </authorList>
    </citation>
    <scope>NUCLEOTIDE SEQUENCE [GENOMIC DNA]</scope>
</reference>
<proteinExistence type="inferred from homology"/>
<accession>Q9TUA4</accession>
<sequence>MQPESGANGTVIAEFILLGLLEAPGLQPVVFVLFLFAYLVTVGGNLSILAAVLVEPKLHSPMYFFLGNLSVLDVGCISVTVPSMLSRLLSRKRAVPCGACLTQLFFFHLFVGVDCFLLTAMAYDRFLAICRPLTYSTRMSQTVQRMLVAASWACAFTNALTHTVAMSTLNFCGPNEVNHFYCDLPQLFQLSCSSTQLNELLLFAVGFIMAGTPMALIVISYIHVAAAVLRIRSVEGRKKAFSTCGSHLTVVAMFYGSGIFNYMRLGSTKLSDKDKAVGIFNTVINPMVNPIIYRFRNPEVQSAIWRMLTGRRSLA</sequence>
<feature type="chain" id="PRO_0000150517" description="Olfactory receptor 3A1">
    <location>
        <begin position="1"/>
        <end position="315"/>
    </location>
</feature>
<feature type="topological domain" description="Extracellular" evidence="1">
    <location>
        <begin position="1"/>
        <end position="28"/>
    </location>
</feature>
<feature type="transmembrane region" description="Helical; Name=1" evidence="1">
    <location>
        <begin position="29"/>
        <end position="52"/>
    </location>
</feature>
<feature type="topological domain" description="Cytoplasmic" evidence="1">
    <location>
        <begin position="53"/>
        <end position="60"/>
    </location>
</feature>
<feature type="transmembrane region" description="Helical; Name=2" evidence="1">
    <location>
        <begin position="61"/>
        <end position="82"/>
    </location>
</feature>
<feature type="topological domain" description="Extracellular" evidence="1">
    <location>
        <begin position="83"/>
        <end position="103"/>
    </location>
</feature>
<feature type="transmembrane region" description="Helical; Name=3" evidence="1">
    <location>
        <begin position="104"/>
        <end position="123"/>
    </location>
</feature>
<feature type="topological domain" description="Cytoplasmic" evidence="1">
    <location>
        <begin position="124"/>
        <end position="143"/>
    </location>
</feature>
<feature type="transmembrane region" description="Helical; Name=4" evidence="1">
    <location>
        <begin position="144"/>
        <end position="161"/>
    </location>
</feature>
<feature type="topological domain" description="Extracellular" evidence="1">
    <location>
        <begin position="162"/>
        <end position="199"/>
    </location>
</feature>
<feature type="transmembrane region" description="Helical; Name=5" evidence="1">
    <location>
        <begin position="200"/>
        <end position="223"/>
    </location>
</feature>
<feature type="topological domain" description="Cytoplasmic" evidence="1">
    <location>
        <begin position="224"/>
        <end position="240"/>
    </location>
</feature>
<feature type="transmembrane region" description="Helical; Name=6" evidence="1">
    <location>
        <begin position="241"/>
        <end position="264"/>
    </location>
</feature>
<feature type="topological domain" description="Extracellular" evidence="1">
    <location>
        <begin position="265"/>
        <end position="275"/>
    </location>
</feature>
<feature type="transmembrane region" description="Helical; Name=7" evidence="1">
    <location>
        <begin position="276"/>
        <end position="295"/>
    </location>
</feature>
<feature type="topological domain" description="Cytoplasmic" evidence="1">
    <location>
        <begin position="296"/>
        <end position="315"/>
    </location>
</feature>
<feature type="glycosylation site" description="N-linked (GlcNAc...) asparagine" evidence="1">
    <location>
        <position position="8"/>
    </location>
</feature>
<feature type="disulfide bond" evidence="2">
    <location>
        <begin position="100"/>
        <end position="192"/>
    </location>
</feature>
<keyword id="KW-1003">Cell membrane</keyword>
<keyword id="KW-1015">Disulfide bond</keyword>
<keyword id="KW-0297">G-protein coupled receptor</keyword>
<keyword id="KW-0325">Glycoprotein</keyword>
<keyword id="KW-0472">Membrane</keyword>
<keyword id="KW-0552">Olfaction</keyword>
<keyword id="KW-0675">Receptor</keyword>
<keyword id="KW-1185">Reference proteome</keyword>
<keyword id="KW-0716">Sensory transduction</keyword>
<keyword id="KW-0807">Transducer</keyword>
<keyword id="KW-0812">Transmembrane</keyword>
<keyword id="KW-1133">Transmembrane helix</keyword>
<dbReference type="EMBL" id="AF101738">
    <property type="protein sequence ID" value="AAF03320.1"/>
    <property type="molecule type" value="Genomic_DNA"/>
</dbReference>
<dbReference type="SMR" id="Q9TUA4"/>
<dbReference type="FunCoup" id="Q9TUA4">
    <property type="interactions" value="344"/>
</dbReference>
<dbReference type="STRING" id="9598.ENSPTRP00000080160"/>
<dbReference type="GlyCosmos" id="Q9TUA4">
    <property type="glycosylation" value="1 site, No reported glycans"/>
</dbReference>
<dbReference type="PaxDb" id="9598-ENSPTRP00000014613"/>
<dbReference type="eggNOG" id="ENOG502RU17">
    <property type="taxonomic scope" value="Eukaryota"/>
</dbReference>
<dbReference type="InParanoid" id="Q9TUA4"/>
<dbReference type="Proteomes" id="UP000002277">
    <property type="component" value="Unplaced"/>
</dbReference>
<dbReference type="GO" id="GO:0005886">
    <property type="term" value="C:plasma membrane"/>
    <property type="evidence" value="ECO:0007669"/>
    <property type="project" value="UniProtKB-SubCell"/>
</dbReference>
<dbReference type="GO" id="GO:0004930">
    <property type="term" value="F:G protein-coupled receptor activity"/>
    <property type="evidence" value="ECO:0007669"/>
    <property type="project" value="UniProtKB-KW"/>
</dbReference>
<dbReference type="GO" id="GO:0005549">
    <property type="term" value="F:odorant binding"/>
    <property type="evidence" value="ECO:0000318"/>
    <property type="project" value="GO_Central"/>
</dbReference>
<dbReference type="GO" id="GO:0004984">
    <property type="term" value="F:olfactory receptor activity"/>
    <property type="evidence" value="ECO:0000318"/>
    <property type="project" value="GO_Central"/>
</dbReference>
<dbReference type="FunFam" id="1.20.1070.10:FF:000010">
    <property type="entry name" value="Olfactory receptor"/>
    <property type="match status" value="1"/>
</dbReference>
<dbReference type="Gene3D" id="1.20.1070.10">
    <property type="entry name" value="Rhodopsin 7-helix transmembrane proteins"/>
    <property type="match status" value="1"/>
</dbReference>
<dbReference type="InterPro" id="IPR000276">
    <property type="entry name" value="GPCR_Rhodpsn"/>
</dbReference>
<dbReference type="InterPro" id="IPR017452">
    <property type="entry name" value="GPCR_Rhodpsn_7TM"/>
</dbReference>
<dbReference type="InterPro" id="IPR000725">
    <property type="entry name" value="Olfact_rcpt"/>
</dbReference>
<dbReference type="PANTHER" id="PTHR48001">
    <property type="entry name" value="OLFACTORY RECEPTOR"/>
    <property type="match status" value="1"/>
</dbReference>
<dbReference type="Pfam" id="PF13853">
    <property type="entry name" value="7tm_4"/>
    <property type="match status" value="1"/>
</dbReference>
<dbReference type="PRINTS" id="PR00237">
    <property type="entry name" value="GPCRRHODOPSN"/>
</dbReference>
<dbReference type="PRINTS" id="PR00245">
    <property type="entry name" value="OLFACTORYR"/>
</dbReference>
<dbReference type="SUPFAM" id="SSF81321">
    <property type="entry name" value="Family A G protein-coupled receptor-like"/>
    <property type="match status" value="1"/>
</dbReference>
<dbReference type="PROSITE" id="PS00237">
    <property type="entry name" value="G_PROTEIN_RECEP_F1_1"/>
    <property type="match status" value="1"/>
</dbReference>
<dbReference type="PROSITE" id="PS50262">
    <property type="entry name" value="G_PROTEIN_RECEP_F1_2"/>
    <property type="match status" value="1"/>
</dbReference>
<evidence type="ECO:0000255" key="1"/>
<evidence type="ECO:0000255" key="2">
    <source>
        <dbReference type="PROSITE-ProRule" id="PRU00521"/>
    </source>
</evidence>
<evidence type="ECO:0000305" key="3"/>
<gene>
    <name type="primary">OR3A1</name>
</gene>
<name>OR3A1_PANTR</name>
<comment type="function">
    <text evidence="3">Odorant receptor.</text>
</comment>
<comment type="subcellular location">
    <subcellularLocation>
        <location>Cell membrane</location>
        <topology>Multi-pass membrane protein</topology>
    </subcellularLocation>
</comment>
<comment type="similarity">
    <text evidence="2">Belongs to the G-protein coupled receptor 1 family.</text>
</comment>
<protein>
    <recommendedName>
        <fullName>Olfactory receptor 3A1</fullName>
    </recommendedName>
</protein>